<gene>
    <name evidence="1" type="primary">ilvD</name>
    <name type="ordered locus">HH_0850</name>
</gene>
<evidence type="ECO:0000255" key="1">
    <source>
        <dbReference type="HAMAP-Rule" id="MF_00012"/>
    </source>
</evidence>
<keyword id="KW-0001">2Fe-2S</keyword>
<keyword id="KW-0028">Amino-acid biosynthesis</keyword>
<keyword id="KW-0100">Branched-chain amino acid biosynthesis</keyword>
<keyword id="KW-0408">Iron</keyword>
<keyword id="KW-0411">Iron-sulfur</keyword>
<keyword id="KW-0456">Lyase</keyword>
<keyword id="KW-0460">Magnesium</keyword>
<keyword id="KW-0479">Metal-binding</keyword>
<keyword id="KW-1185">Reference proteome</keyword>
<name>ILVD_HELHP</name>
<proteinExistence type="inferred from homology"/>
<protein>
    <recommendedName>
        <fullName evidence="1">Dihydroxy-acid dehydratase</fullName>
        <shortName evidence="1">DAD</shortName>
        <ecNumber evidence="1">4.2.1.9</ecNumber>
    </recommendedName>
</protein>
<dbReference type="EC" id="4.2.1.9" evidence="1"/>
<dbReference type="EMBL" id="AE017125">
    <property type="protein sequence ID" value="AAP77447.1"/>
    <property type="molecule type" value="Genomic_DNA"/>
</dbReference>
<dbReference type="RefSeq" id="WP_011115690.1">
    <property type="nucleotide sequence ID" value="NC_004917.1"/>
</dbReference>
<dbReference type="SMR" id="Q7VHW3"/>
<dbReference type="STRING" id="235279.HH_0850"/>
<dbReference type="KEGG" id="hhe:HH_0850"/>
<dbReference type="eggNOG" id="COG0129">
    <property type="taxonomic scope" value="Bacteria"/>
</dbReference>
<dbReference type="HOGENOM" id="CLU_014271_4_2_7"/>
<dbReference type="OrthoDB" id="9807077at2"/>
<dbReference type="UniPathway" id="UPA00047">
    <property type="reaction ID" value="UER00057"/>
</dbReference>
<dbReference type="UniPathway" id="UPA00049">
    <property type="reaction ID" value="UER00061"/>
</dbReference>
<dbReference type="Proteomes" id="UP000002495">
    <property type="component" value="Chromosome"/>
</dbReference>
<dbReference type="GO" id="GO:0005829">
    <property type="term" value="C:cytosol"/>
    <property type="evidence" value="ECO:0007669"/>
    <property type="project" value="TreeGrafter"/>
</dbReference>
<dbReference type="GO" id="GO:0051537">
    <property type="term" value="F:2 iron, 2 sulfur cluster binding"/>
    <property type="evidence" value="ECO:0007669"/>
    <property type="project" value="UniProtKB-UniRule"/>
</dbReference>
<dbReference type="GO" id="GO:0004160">
    <property type="term" value="F:dihydroxy-acid dehydratase activity"/>
    <property type="evidence" value="ECO:0007669"/>
    <property type="project" value="UniProtKB-UniRule"/>
</dbReference>
<dbReference type="GO" id="GO:0000287">
    <property type="term" value="F:magnesium ion binding"/>
    <property type="evidence" value="ECO:0007669"/>
    <property type="project" value="UniProtKB-UniRule"/>
</dbReference>
<dbReference type="GO" id="GO:0009097">
    <property type="term" value="P:isoleucine biosynthetic process"/>
    <property type="evidence" value="ECO:0007669"/>
    <property type="project" value="UniProtKB-UniRule"/>
</dbReference>
<dbReference type="GO" id="GO:0009099">
    <property type="term" value="P:L-valine biosynthetic process"/>
    <property type="evidence" value="ECO:0007669"/>
    <property type="project" value="UniProtKB-UniRule"/>
</dbReference>
<dbReference type="FunFam" id="3.50.30.80:FF:000001">
    <property type="entry name" value="Dihydroxy-acid dehydratase"/>
    <property type="match status" value="1"/>
</dbReference>
<dbReference type="Gene3D" id="3.50.30.80">
    <property type="entry name" value="IlvD/EDD C-terminal domain-like"/>
    <property type="match status" value="1"/>
</dbReference>
<dbReference type="HAMAP" id="MF_00012">
    <property type="entry name" value="IlvD"/>
    <property type="match status" value="1"/>
</dbReference>
<dbReference type="InterPro" id="IPR042096">
    <property type="entry name" value="Dihydro-acid_dehy_C"/>
</dbReference>
<dbReference type="InterPro" id="IPR004404">
    <property type="entry name" value="DihydroxyA_deHydtase"/>
</dbReference>
<dbReference type="InterPro" id="IPR020558">
    <property type="entry name" value="DiOHA_6PGluconate_deHydtase_CS"/>
</dbReference>
<dbReference type="InterPro" id="IPR056740">
    <property type="entry name" value="ILV_EDD_C"/>
</dbReference>
<dbReference type="InterPro" id="IPR000581">
    <property type="entry name" value="ILV_EDD_N"/>
</dbReference>
<dbReference type="InterPro" id="IPR037237">
    <property type="entry name" value="IlvD/EDD_N"/>
</dbReference>
<dbReference type="NCBIfam" id="TIGR00110">
    <property type="entry name" value="ilvD"/>
    <property type="match status" value="1"/>
</dbReference>
<dbReference type="NCBIfam" id="NF002068">
    <property type="entry name" value="PRK00911.1"/>
    <property type="match status" value="1"/>
</dbReference>
<dbReference type="PANTHER" id="PTHR43661">
    <property type="entry name" value="D-XYLONATE DEHYDRATASE"/>
    <property type="match status" value="1"/>
</dbReference>
<dbReference type="PANTHER" id="PTHR43661:SF3">
    <property type="entry name" value="D-XYLONATE DEHYDRATASE YAGF-RELATED"/>
    <property type="match status" value="1"/>
</dbReference>
<dbReference type="Pfam" id="PF24877">
    <property type="entry name" value="ILV_EDD_C"/>
    <property type="match status" value="1"/>
</dbReference>
<dbReference type="Pfam" id="PF00920">
    <property type="entry name" value="ILVD_EDD_N"/>
    <property type="match status" value="1"/>
</dbReference>
<dbReference type="SUPFAM" id="SSF143975">
    <property type="entry name" value="IlvD/EDD N-terminal domain-like"/>
    <property type="match status" value="1"/>
</dbReference>
<dbReference type="SUPFAM" id="SSF52016">
    <property type="entry name" value="LeuD/IlvD-like"/>
    <property type="match status" value="1"/>
</dbReference>
<dbReference type="PROSITE" id="PS00886">
    <property type="entry name" value="ILVD_EDD_1"/>
    <property type="match status" value="1"/>
</dbReference>
<dbReference type="PROSITE" id="PS00887">
    <property type="entry name" value="ILVD_EDD_2"/>
    <property type="match status" value="1"/>
</dbReference>
<organism>
    <name type="scientific">Helicobacter hepaticus (strain ATCC 51449 / 3B1)</name>
    <dbReference type="NCBI Taxonomy" id="235279"/>
    <lineage>
        <taxon>Bacteria</taxon>
        <taxon>Pseudomonadati</taxon>
        <taxon>Campylobacterota</taxon>
        <taxon>Epsilonproteobacteria</taxon>
        <taxon>Campylobacterales</taxon>
        <taxon>Helicobacteraceae</taxon>
        <taxon>Helicobacter</taxon>
    </lineage>
</organism>
<reference key="1">
    <citation type="journal article" date="2003" name="Proc. Natl. Acad. Sci. U.S.A.">
        <title>The complete genome sequence of the carcinogenic bacterium Helicobacter hepaticus.</title>
        <authorList>
            <person name="Suerbaum S."/>
            <person name="Josenhans C."/>
            <person name="Sterzenbach T."/>
            <person name="Drescher B."/>
            <person name="Brandt P."/>
            <person name="Bell M."/>
            <person name="Droege M."/>
            <person name="Fartmann B."/>
            <person name="Fischer H.-P."/>
            <person name="Ge Z."/>
            <person name="Hoerster A."/>
            <person name="Holland R."/>
            <person name="Klein K."/>
            <person name="Koenig J."/>
            <person name="Macko L."/>
            <person name="Mendz G.L."/>
            <person name="Nyakatura G."/>
            <person name="Schauer D.B."/>
            <person name="Shen Z."/>
            <person name="Weber J."/>
            <person name="Frosch M."/>
            <person name="Fox J.G."/>
        </authorList>
    </citation>
    <scope>NUCLEOTIDE SEQUENCE [LARGE SCALE GENOMIC DNA]</scope>
    <source>
        <strain>ATCC 51449 / 3B1</strain>
    </source>
</reference>
<accession>Q7VHW3</accession>
<feature type="chain" id="PRO_0000103471" description="Dihydroxy-acid dehydratase">
    <location>
        <begin position="1"/>
        <end position="572"/>
    </location>
</feature>
<feature type="active site" description="Proton acceptor" evidence="1">
    <location>
        <position position="485"/>
    </location>
</feature>
<feature type="binding site" evidence="1">
    <location>
        <position position="78"/>
    </location>
    <ligand>
        <name>Mg(2+)</name>
        <dbReference type="ChEBI" id="CHEBI:18420"/>
    </ligand>
</feature>
<feature type="binding site" evidence="1">
    <location>
        <position position="119"/>
    </location>
    <ligand>
        <name>[2Fe-2S] cluster</name>
        <dbReference type="ChEBI" id="CHEBI:190135"/>
    </ligand>
</feature>
<feature type="binding site" evidence="1">
    <location>
        <position position="120"/>
    </location>
    <ligand>
        <name>Mg(2+)</name>
        <dbReference type="ChEBI" id="CHEBI:18420"/>
    </ligand>
</feature>
<feature type="binding site" description="via carbamate group" evidence="1">
    <location>
        <position position="121"/>
    </location>
    <ligand>
        <name>Mg(2+)</name>
        <dbReference type="ChEBI" id="CHEBI:18420"/>
    </ligand>
</feature>
<feature type="binding site" evidence="1">
    <location>
        <position position="192"/>
    </location>
    <ligand>
        <name>[2Fe-2S] cluster</name>
        <dbReference type="ChEBI" id="CHEBI:190135"/>
    </ligand>
</feature>
<feature type="binding site" evidence="1">
    <location>
        <position position="459"/>
    </location>
    <ligand>
        <name>Mg(2+)</name>
        <dbReference type="ChEBI" id="CHEBI:18420"/>
    </ligand>
</feature>
<feature type="modified residue" description="N6-carboxylysine" evidence="1">
    <location>
        <position position="121"/>
    </location>
</feature>
<sequence>MRSDIVKKGYQRAPHRSLLRATGLKDEDFNKPFIGIANSYIDIIPGHFFLNRYAQIIKEEIRAAGGVPFEFNTIGVDDGIAMGHSGMLYSLPSRELIADSIETMMNAHSLDAMICIPNCDKIVPGMLMGALRVNVPTIFVSGGPMKAGKLEDGTILDLNSAFEAVGAFAEGKISEKRLHEIECNACPGGGSCSGMFTANSMNTLCEAMGVALPGNGTILALSKEREELLRKAARRIVEIALDERKTEQFRFRNILNKKAVHNAFVVDMAMGGSTNTILHMLAIAKEAEVDFNLDSINAIASQVAHIAKIAPALSTIHMEDINRAGGVSAVMNEVAKRNASLGSHSADSILYLDALTITGETLGERIANAQIVDSSVIRHNENAYSPVGGLKILYGNLAREGAVLKVAAVAESMKEFEGSAVCFNSQEEAIKGIAGGKVKAGNVVVIRYEGPKGGPGMQEMLTPTSLIMGMGLGESVALITDGRFSGATRGGCIGHISPEAAEGGLIALIEDGDKIAISVSKGTLELLVDSKIIESRRTQWKPIKKEIKSKWLKRYSLLVSNAANGAVLKTEI</sequence>
<comment type="function">
    <text evidence="1">Functions in the biosynthesis of branched-chain amino acids. Catalyzes the dehydration of (2R,3R)-2,3-dihydroxy-3-methylpentanoate (2,3-dihydroxy-3-methylvalerate) into 2-oxo-3-methylpentanoate (2-oxo-3-methylvalerate) and of (2R)-2,3-dihydroxy-3-methylbutanoate (2,3-dihydroxyisovalerate) into 2-oxo-3-methylbutanoate (2-oxoisovalerate), the penultimate precursor to L-isoleucine and L-valine, respectively.</text>
</comment>
<comment type="catalytic activity">
    <reaction evidence="1">
        <text>(2R)-2,3-dihydroxy-3-methylbutanoate = 3-methyl-2-oxobutanoate + H2O</text>
        <dbReference type="Rhea" id="RHEA:24809"/>
        <dbReference type="ChEBI" id="CHEBI:11851"/>
        <dbReference type="ChEBI" id="CHEBI:15377"/>
        <dbReference type="ChEBI" id="CHEBI:49072"/>
        <dbReference type="EC" id="4.2.1.9"/>
    </reaction>
    <physiologicalReaction direction="left-to-right" evidence="1">
        <dbReference type="Rhea" id="RHEA:24810"/>
    </physiologicalReaction>
</comment>
<comment type="catalytic activity">
    <reaction evidence="1">
        <text>(2R,3R)-2,3-dihydroxy-3-methylpentanoate = (S)-3-methyl-2-oxopentanoate + H2O</text>
        <dbReference type="Rhea" id="RHEA:27694"/>
        <dbReference type="ChEBI" id="CHEBI:15377"/>
        <dbReference type="ChEBI" id="CHEBI:35146"/>
        <dbReference type="ChEBI" id="CHEBI:49258"/>
        <dbReference type="EC" id="4.2.1.9"/>
    </reaction>
    <physiologicalReaction direction="left-to-right" evidence="1">
        <dbReference type="Rhea" id="RHEA:27695"/>
    </physiologicalReaction>
</comment>
<comment type="cofactor">
    <cofactor evidence="1">
        <name>[2Fe-2S] cluster</name>
        <dbReference type="ChEBI" id="CHEBI:190135"/>
    </cofactor>
    <text evidence="1">Binds 1 [2Fe-2S] cluster per subunit. This cluster acts as a Lewis acid cofactor.</text>
</comment>
<comment type="cofactor">
    <cofactor evidence="1">
        <name>Mg(2+)</name>
        <dbReference type="ChEBI" id="CHEBI:18420"/>
    </cofactor>
</comment>
<comment type="pathway">
    <text evidence="1">Amino-acid biosynthesis; L-isoleucine biosynthesis; L-isoleucine from 2-oxobutanoate: step 3/4.</text>
</comment>
<comment type="pathway">
    <text evidence="1">Amino-acid biosynthesis; L-valine biosynthesis; L-valine from pyruvate: step 3/4.</text>
</comment>
<comment type="subunit">
    <text evidence="1">Homodimer.</text>
</comment>
<comment type="similarity">
    <text evidence="1">Belongs to the IlvD/Edd family.</text>
</comment>